<comment type="function">
    <text evidence="4 5 6">Splicing factor involved in pre-mRNA splicing and component of the spliceosome (PubMed:18702672, PubMed:19168457). Essential for reproduction. In female gametophyte, is necessary for the egg cell and central cell fate determination and hence reproductive success. Involved in a mechanism that prevents accessory cells from adopting gametic cell fate. Is necessary to restrict LIS expression to interfere with egg-cell specification (PubMed:18702672). Probable component of U5 small nuclear ribonucleoprotein (snRNP) that is required for pre-mRNA splicing. Plays an essential role in female gametogenesis and embryo development (PubMed:19261069). Required for the control of polarized cell growth and cell proliferation during floral organ morphogenesis (PubMed:19168457).</text>
</comment>
<comment type="subunit">
    <text evidence="6">Interacts with BRR2A and PRP8A.</text>
</comment>
<comment type="subcellular location">
    <subcellularLocation>
        <location evidence="4 5">Nucleus speckle</location>
    </subcellularLocation>
    <text evidence="4 5">Colocalizes with CLO (PubMed:18702672). Colocalizes with SC35 (PubMed:19168457).</text>
</comment>
<comment type="tissue specificity">
    <text evidence="7">Expressed in flower buds, open flowers and siliques. Expressed at low levels in rosettes leaves, cauline leaves and stems.</text>
</comment>
<comment type="developmental stage">
    <text evidence="6">Expressed in developing embryos until heart stage.</text>
</comment>
<comment type="disruption phenotype">
    <text evidence="4 7">Gametophytic lethality due to female gametophyte defect, when homozygous.</text>
</comment>
<comment type="miscellaneous">
    <text evidence="9">This protein was named 'VAJRA', because the shape of flower buds when ready to open resemble VAJRA, an instrument used in esoteric Buddhism.</text>
</comment>
<comment type="similarity">
    <text evidence="2">Belongs to the TRAFAC class translation factor GTPase superfamily. Classic translation factor GTPase family.</text>
</comment>
<gene>
    <name evidence="8" type="primary">CLO</name>
    <name evidence="10" type="synonym">GFA1</name>
    <name evidence="11" type="synonym">MEE5</name>
    <name evidence="9" type="synonym">VAJ-1</name>
    <name evidence="12" type="ordered locus">At1g06220</name>
    <name evidence="13" type="ORF">F9P14.8</name>
</gene>
<organism>
    <name type="scientific">Arabidopsis thaliana</name>
    <name type="common">Mouse-ear cress</name>
    <dbReference type="NCBI Taxonomy" id="3702"/>
    <lineage>
        <taxon>Eukaryota</taxon>
        <taxon>Viridiplantae</taxon>
        <taxon>Streptophyta</taxon>
        <taxon>Embryophyta</taxon>
        <taxon>Tracheophyta</taxon>
        <taxon>Spermatophyta</taxon>
        <taxon>Magnoliopsida</taxon>
        <taxon>eudicotyledons</taxon>
        <taxon>Gunneridae</taxon>
        <taxon>Pentapetalae</taxon>
        <taxon>rosids</taxon>
        <taxon>malvids</taxon>
        <taxon>Brassicales</taxon>
        <taxon>Brassicaceae</taxon>
        <taxon>Camelineae</taxon>
        <taxon>Arabidopsis</taxon>
    </lineage>
</organism>
<feature type="chain" id="PRO_0000436561" description="110 kDa U5 small nuclear ribonucleoprotein component CLO">
    <location>
        <begin position="1"/>
        <end position="987"/>
    </location>
</feature>
<feature type="domain" description="tr-type G" evidence="2">
    <location>
        <begin position="136"/>
        <end position="422"/>
    </location>
</feature>
<feature type="region of interest" description="Disordered" evidence="3">
    <location>
        <begin position="1"/>
        <end position="54"/>
    </location>
</feature>
<feature type="region of interest" description="G1" evidence="2">
    <location>
        <begin position="145"/>
        <end position="152"/>
    </location>
</feature>
<feature type="region of interest" description="G2" evidence="2">
    <location>
        <begin position="189"/>
        <end position="193"/>
    </location>
</feature>
<feature type="region of interest" description="G3" evidence="2">
    <location>
        <begin position="215"/>
        <end position="218"/>
    </location>
</feature>
<feature type="region of interest" description="G4" evidence="2">
    <location>
        <begin position="269"/>
        <end position="272"/>
    </location>
</feature>
<feature type="region of interest" description="G5" evidence="2">
    <location>
        <begin position="395"/>
        <end position="397"/>
    </location>
</feature>
<feature type="compositionally biased region" description="Acidic residues" evidence="3">
    <location>
        <begin position="17"/>
        <end position="32"/>
    </location>
</feature>
<feature type="binding site" evidence="1">
    <location>
        <begin position="145"/>
        <end position="152"/>
    </location>
    <ligand>
        <name>GTP</name>
        <dbReference type="ChEBI" id="CHEBI:37565"/>
    </ligand>
</feature>
<feature type="binding site" evidence="1">
    <location>
        <begin position="215"/>
        <end position="219"/>
    </location>
    <ligand>
        <name>GTP</name>
        <dbReference type="ChEBI" id="CHEBI:37565"/>
    </ligand>
</feature>
<feature type="binding site" evidence="1">
    <location>
        <begin position="269"/>
        <end position="272"/>
    </location>
    <ligand>
        <name>GTP</name>
        <dbReference type="ChEBI" id="CHEBI:37565"/>
    </ligand>
</feature>
<evidence type="ECO:0000255" key="1"/>
<evidence type="ECO:0000255" key="2">
    <source>
        <dbReference type="PROSITE-ProRule" id="PRU01059"/>
    </source>
</evidence>
<evidence type="ECO:0000256" key="3">
    <source>
        <dbReference type="SAM" id="MobiDB-lite"/>
    </source>
</evidence>
<evidence type="ECO:0000269" key="4">
    <source>
    </source>
</evidence>
<evidence type="ECO:0000269" key="5">
    <source>
    </source>
</evidence>
<evidence type="ECO:0000269" key="6">
    <source>
    </source>
</evidence>
<evidence type="ECO:0000269" key="7">
    <source ref="4"/>
</evidence>
<evidence type="ECO:0000303" key="8">
    <source>
    </source>
</evidence>
<evidence type="ECO:0000303" key="9">
    <source>
    </source>
</evidence>
<evidence type="ECO:0000303" key="10">
    <source ref="4"/>
</evidence>
<evidence type="ECO:0000305" key="11"/>
<evidence type="ECO:0000312" key="12">
    <source>
        <dbReference type="Araport" id="AT1G06220"/>
    </source>
</evidence>
<evidence type="ECO:0000312" key="13">
    <source>
        <dbReference type="EMBL" id="AAF80219.1"/>
    </source>
</evidence>
<proteinExistence type="evidence at protein level"/>
<accession>Q9LNC5</accession>
<sequence>MESSLYDEFGNYVGPEIESDRDSDDEVEDEDLQDKHLEENGSDGEQGPGGSNGWITTINDVEMENQIVLPEDKKYYPTAEEVYGEDVETLVMDEDEQPLEQPIIKPVRDIRFEVGVKDQATYVSTQFLIGLMSNPALVRNVALVGHLQHGKTVFMDMLVEQTHHMSTFNAKNEKHMKYTDTRVDEQERNISIKAVPMSLVLEDSRSKSYLCNIMDTPGHVNFSDEMTASLRLADGAVLIVDAAEGVMVNTERAIRHAIQDHLPIVVVINKVDRLITELKLPPRDAYYKLRHTIEVINNHISAASTTAGDLPLIDPAAGNVCFASGTAGWSFTLQSFAKMYAKLHGVAMDVDKFASRLWGDVYYHSDTRVFKRSPPVGGGERAFVQFILEPLYKIYSQVIGEHKKSVETTLAELGVTLSNSAYKLNVRPLLRLACSSVFGSASGFTDMLVKHIPSPREAAARKVDHSYTGTKDSPIYESMVECDPSGPLMVNVTKLYPKSDTSVFDVFGRVYSGRLQTGQSVRVLGEGYSPEDEEDMTIKEVTKLWIYQARYRIPVSSAPPGSWVLIEGVDASIMKTATLCNASYDEDVYIFRALQFNTLPVVKTATEPLNPSELPKMVEGLRKISKSYPLAITKVEESGEHTILGTGELYLDSIMKDLRELYSEVEVKVADPVVSFCETVVESSSMKCFAETPNKKNKITMIAEPLDRGLAEDIENGVVSIDWNRKQLGDFFRTKYDWDLLAARSIWAFGPDKQGPNILLDDTLPTEVDRNLMMAVKDSIVQGFQWGAREGPLCDEPIRNVKFKIVDARIAPEPLHRGSGQMIPTARRVAYSAFLMATPRLMEPVYYVEIQTPIDCVTAIYTVLSRRRGHVTSDVPQPGTPAYIVKAFLPVIESFGFETDLRYHTQGQAFCLSVFDHWAIVPGDPLDKAIQLRPLEPAPIQHLAREFMVKTRRRKGMSEDVSGNKFFDEAMMVELAQQTGDLHLQMI</sequence>
<dbReference type="EMBL" id="AC025290">
    <property type="protein sequence ID" value="AAF80219.1"/>
    <property type="molecule type" value="Genomic_DNA"/>
</dbReference>
<dbReference type="EMBL" id="CP002684">
    <property type="protein sequence ID" value="AEE27961.1"/>
    <property type="molecule type" value="Genomic_DNA"/>
</dbReference>
<dbReference type="EMBL" id="CP002684">
    <property type="protein sequence ID" value="AEE27962.1"/>
    <property type="molecule type" value="Genomic_DNA"/>
</dbReference>
<dbReference type="EMBL" id="CP002684">
    <property type="protein sequence ID" value="ANM58878.1"/>
    <property type="molecule type" value="Genomic_DNA"/>
</dbReference>
<dbReference type="EMBL" id="AK226591">
    <property type="protein sequence ID" value="BAE98706.1"/>
    <property type="molecule type" value="mRNA"/>
</dbReference>
<dbReference type="PIR" id="H86197">
    <property type="entry name" value="H86197"/>
</dbReference>
<dbReference type="RefSeq" id="NP_001321282.1">
    <property type="nucleotide sequence ID" value="NM_001331621.1"/>
</dbReference>
<dbReference type="RefSeq" id="NP_172112.1">
    <property type="nucleotide sequence ID" value="NM_100503.5"/>
</dbReference>
<dbReference type="RefSeq" id="NP_849600.1">
    <property type="nucleotide sequence ID" value="NM_179269.4"/>
</dbReference>
<dbReference type="SMR" id="Q9LNC5"/>
<dbReference type="FunCoup" id="Q9LNC5">
    <property type="interactions" value="5129"/>
</dbReference>
<dbReference type="IntAct" id="Q9LNC5">
    <property type="interactions" value="4"/>
</dbReference>
<dbReference type="STRING" id="3702.Q9LNC5"/>
<dbReference type="GlyGen" id="Q9LNC5">
    <property type="glycosylation" value="1 site"/>
</dbReference>
<dbReference type="iPTMnet" id="Q9LNC5"/>
<dbReference type="PaxDb" id="3702-AT1G06220.2"/>
<dbReference type="ProteomicsDB" id="246749"/>
<dbReference type="EnsemblPlants" id="AT1G06220.1">
    <property type="protein sequence ID" value="AT1G06220.1"/>
    <property type="gene ID" value="AT1G06220"/>
</dbReference>
<dbReference type="EnsemblPlants" id="AT1G06220.2">
    <property type="protein sequence ID" value="AT1G06220.2"/>
    <property type="gene ID" value="AT1G06220"/>
</dbReference>
<dbReference type="EnsemblPlants" id="AT1G06220.3">
    <property type="protein sequence ID" value="AT1G06220.3"/>
    <property type="gene ID" value="AT1G06220"/>
</dbReference>
<dbReference type="GeneID" id="837131"/>
<dbReference type="Gramene" id="AT1G06220.1">
    <property type="protein sequence ID" value="AT1G06220.1"/>
    <property type="gene ID" value="AT1G06220"/>
</dbReference>
<dbReference type="Gramene" id="AT1G06220.2">
    <property type="protein sequence ID" value="AT1G06220.2"/>
    <property type="gene ID" value="AT1G06220"/>
</dbReference>
<dbReference type="Gramene" id="AT1G06220.3">
    <property type="protein sequence ID" value="AT1G06220.3"/>
    <property type="gene ID" value="AT1G06220"/>
</dbReference>
<dbReference type="KEGG" id="ath:AT1G06220"/>
<dbReference type="Araport" id="AT1G06220"/>
<dbReference type="TAIR" id="AT1G06220">
    <property type="gene designation" value="MEE5"/>
</dbReference>
<dbReference type="eggNOG" id="KOG0468">
    <property type="taxonomic scope" value="Eukaryota"/>
</dbReference>
<dbReference type="HOGENOM" id="CLU_002794_11_2_1"/>
<dbReference type="InParanoid" id="Q9LNC5"/>
<dbReference type="OMA" id="YIFRPIR"/>
<dbReference type="OrthoDB" id="364892at2759"/>
<dbReference type="PhylomeDB" id="Q9LNC5"/>
<dbReference type="CD-CODE" id="4299E36E">
    <property type="entry name" value="Nucleolus"/>
</dbReference>
<dbReference type="PRO" id="PR:Q9LNC5"/>
<dbReference type="Proteomes" id="UP000006548">
    <property type="component" value="Chromosome 1"/>
</dbReference>
<dbReference type="ExpressionAtlas" id="Q9LNC5">
    <property type="expression patterns" value="baseline and differential"/>
</dbReference>
<dbReference type="GO" id="GO:0005576">
    <property type="term" value="C:extracellular region"/>
    <property type="evidence" value="ECO:0007005"/>
    <property type="project" value="TAIR"/>
</dbReference>
<dbReference type="GO" id="GO:0016607">
    <property type="term" value="C:nuclear speck"/>
    <property type="evidence" value="ECO:0000314"/>
    <property type="project" value="TAIR"/>
</dbReference>
<dbReference type="GO" id="GO:0009505">
    <property type="term" value="C:plant-type cell wall"/>
    <property type="evidence" value="ECO:0007005"/>
    <property type="project" value="TAIR"/>
</dbReference>
<dbReference type="GO" id="GO:0005681">
    <property type="term" value="C:spliceosomal complex"/>
    <property type="evidence" value="ECO:0007669"/>
    <property type="project" value="UniProtKB-KW"/>
</dbReference>
<dbReference type="GO" id="GO:0005525">
    <property type="term" value="F:GTP binding"/>
    <property type="evidence" value="ECO:0007669"/>
    <property type="project" value="UniProtKB-KW"/>
</dbReference>
<dbReference type="GO" id="GO:0003924">
    <property type="term" value="F:GTPase activity"/>
    <property type="evidence" value="ECO:0007669"/>
    <property type="project" value="InterPro"/>
</dbReference>
<dbReference type="GO" id="GO:0009793">
    <property type="term" value="P:embryo development ending in seed dormancy"/>
    <property type="evidence" value="ECO:0000315"/>
    <property type="project" value="TAIR"/>
</dbReference>
<dbReference type="GO" id="GO:0048437">
    <property type="term" value="P:floral organ development"/>
    <property type="evidence" value="ECO:0000315"/>
    <property type="project" value="UniProtKB"/>
</dbReference>
<dbReference type="GO" id="GO:0006397">
    <property type="term" value="P:mRNA processing"/>
    <property type="evidence" value="ECO:0007669"/>
    <property type="project" value="UniProtKB-KW"/>
</dbReference>
<dbReference type="GO" id="GO:0045694">
    <property type="term" value="P:regulation of embryo sac egg cell differentiation"/>
    <property type="evidence" value="ECO:0000315"/>
    <property type="project" value="TAIR"/>
</dbReference>
<dbReference type="GO" id="GO:0008380">
    <property type="term" value="P:RNA splicing"/>
    <property type="evidence" value="ECO:0007669"/>
    <property type="project" value="UniProtKB-KW"/>
</dbReference>
<dbReference type="CDD" id="cd04098">
    <property type="entry name" value="eEF2_C_snRNP"/>
    <property type="match status" value="1"/>
</dbReference>
<dbReference type="CDD" id="cd04090">
    <property type="entry name" value="EF2_II_snRNP"/>
    <property type="match status" value="1"/>
</dbReference>
<dbReference type="CDD" id="cd01683">
    <property type="entry name" value="EF2_IV_snRNP"/>
    <property type="match status" value="1"/>
</dbReference>
<dbReference type="CDD" id="cd16264">
    <property type="entry name" value="snRNP_III"/>
    <property type="match status" value="1"/>
</dbReference>
<dbReference type="CDD" id="cd04167">
    <property type="entry name" value="Snu114p"/>
    <property type="match status" value="1"/>
</dbReference>
<dbReference type="FunFam" id="3.30.70.240:FF:000004">
    <property type="entry name" value="116 kDa U5 small nuclear ribonucleoprotein"/>
    <property type="match status" value="1"/>
</dbReference>
<dbReference type="FunFam" id="2.40.30.10:FF:000029">
    <property type="entry name" value="116 kDa U5 small nuclear ribonucleoprotein component"/>
    <property type="match status" value="1"/>
</dbReference>
<dbReference type="FunFam" id="3.30.230.10:FF:000009">
    <property type="entry name" value="116 kDa U5 small nuclear ribonucleoprotein component"/>
    <property type="match status" value="1"/>
</dbReference>
<dbReference type="FunFam" id="3.90.1430.10:FF:000001">
    <property type="entry name" value="116 kDa U5 small nuclear ribonucleoprotein component"/>
    <property type="match status" value="1"/>
</dbReference>
<dbReference type="FunFam" id="3.30.70.870:FF:000002">
    <property type="entry name" value="Translation elongation factor 2"/>
    <property type="match status" value="1"/>
</dbReference>
<dbReference type="FunFam" id="3.40.50.300:FF:000646">
    <property type="entry name" value="U5 small nuclear ribonucleoprotein component"/>
    <property type="match status" value="1"/>
</dbReference>
<dbReference type="Gene3D" id="3.30.230.10">
    <property type="match status" value="1"/>
</dbReference>
<dbReference type="Gene3D" id="3.30.70.240">
    <property type="match status" value="1"/>
</dbReference>
<dbReference type="Gene3D" id="3.30.70.870">
    <property type="entry name" value="Elongation Factor G (Translational Gtpase), domain 3"/>
    <property type="match status" value="1"/>
</dbReference>
<dbReference type="Gene3D" id="3.40.50.300">
    <property type="entry name" value="P-loop containing nucleotide triphosphate hydrolases"/>
    <property type="match status" value="1"/>
</dbReference>
<dbReference type="Gene3D" id="2.40.30.10">
    <property type="entry name" value="Translation factors"/>
    <property type="match status" value="1"/>
</dbReference>
<dbReference type="Gene3D" id="3.90.1430.10">
    <property type="entry name" value="Yeast translation eEF2 (G' domain)"/>
    <property type="match status" value="1"/>
</dbReference>
<dbReference type="InterPro" id="IPR035647">
    <property type="entry name" value="EFG_III/V"/>
</dbReference>
<dbReference type="InterPro" id="IPR000640">
    <property type="entry name" value="EFG_V-like"/>
</dbReference>
<dbReference type="InterPro" id="IPR004161">
    <property type="entry name" value="EFTu-like_2"/>
</dbReference>
<dbReference type="InterPro" id="IPR031950">
    <property type="entry name" value="EFTUD2_N"/>
</dbReference>
<dbReference type="InterPro" id="IPR027417">
    <property type="entry name" value="P-loop_NTPase"/>
</dbReference>
<dbReference type="InterPro" id="IPR020568">
    <property type="entry name" value="Ribosomal_Su5_D2-typ_SF"/>
</dbReference>
<dbReference type="InterPro" id="IPR014721">
    <property type="entry name" value="Ribsml_uS5_D2-typ_fold_subgr"/>
</dbReference>
<dbReference type="InterPro" id="IPR005225">
    <property type="entry name" value="Small_GTP-bd"/>
</dbReference>
<dbReference type="InterPro" id="IPR044121">
    <property type="entry name" value="Snu114_GTP-bd"/>
</dbReference>
<dbReference type="InterPro" id="IPR000795">
    <property type="entry name" value="T_Tr_GTP-bd_dom"/>
</dbReference>
<dbReference type="InterPro" id="IPR009000">
    <property type="entry name" value="Transl_B-barrel_sf"/>
</dbReference>
<dbReference type="InterPro" id="IPR005517">
    <property type="entry name" value="Transl_elong_EFG/EF2_IV"/>
</dbReference>
<dbReference type="InterPro" id="IPR035655">
    <property type="entry name" value="U5-116kDa_C"/>
</dbReference>
<dbReference type="NCBIfam" id="TIGR00231">
    <property type="entry name" value="small_GTP"/>
    <property type="match status" value="1"/>
</dbReference>
<dbReference type="PANTHER" id="PTHR42908:SF6">
    <property type="entry name" value="116 KDA U5 SMALL NUCLEAR RIBONUCLEOPROTEIN COMPONENT"/>
    <property type="match status" value="1"/>
</dbReference>
<dbReference type="PANTHER" id="PTHR42908">
    <property type="entry name" value="TRANSLATION ELONGATION FACTOR-RELATED"/>
    <property type="match status" value="1"/>
</dbReference>
<dbReference type="Pfam" id="PF00679">
    <property type="entry name" value="EFG_C"/>
    <property type="match status" value="1"/>
</dbReference>
<dbReference type="Pfam" id="PF03764">
    <property type="entry name" value="EFG_IV"/>
    <property type="match status" value="1"/>
</dbReference>
<dbReference type="Pfam" id="PF16004">
    <property type="entry name" value="EFTUD2"/>
    <property type="match status" value="1"/>
</dbReference>
<dbReference type="Pfam" id="PF00009">
    <property type="entry name" value="GTP_EFTU"/>
    <property type="match status" value="1"/>
</dbReference>
<dbReference type="Pfam" id="PF03144">
    <property type="entry name" value="GTP_EFTU_D2"/>
    <property type="match status" value="1"/>
</dbReference>
<dbReference type="PRINTS" id="PR00315">
    <property type="entry name" value="ELONGATNFCT"/>
</dbReference>
<dbReference type="SMART" id="SM00838">
    <property type="entry name" value="EFG_C"/>
    <property type="match status" value="1"/>
</dbReference>
<dbReference type="SMART" id="SM00889">
    <property type="entry name" value="EFG_IV"/>
    <property type="match status" value="1"/>
</dbReference>
<dbReference type="SUPFAM" id="SSF54980">
    <property type="entry name" value="EF-G C-terminal domain-like"/>
    <property type="match status" value="2"/>
</dbReference>
<dbReference type="SUPFAM" id="SSF52540">
    <property type="entry name" value="P-loop containing nucleoside triphosphate hydrolases"/>
    <property type="match status" value="1"/>
</dbReference>
<dbReference type="SUPFAM" id="SSF54211">
    <property type="entry name" value="Ribosomal protein S5 domain 2-like"/>
    <property type="match status" value="1"/>
</dbReference>
<dbReference type="SUPFAM" id="SSF50447">
    <property type="entry name" value="Translation proteins"/>
    <property type="match status" value="1"/>
</dbReference>
<dbReference type="PROSITE" id="PS51722">
    <property type="entry name" value="G_TR_2"/>
    <property type="match status" value="1"/>
</dbReference>
<name>CLO_ARATH</name>
<protein>
    <recommendedName>
        <fullName evidence="11">110 kDa U5 small nuclear ribonucleoprotein component CLO</fullName>
    </recommendedName>
    <alternativeName>
        <fullName evidence="8">Protein CLOTHO</fullName>
    </alternativeName>
    <alternativeName>
        <fullName evidence="10">Protein GAMETOPHYTE FACTOR 1</fullName>
    </alternativeName>
    <alternativeName>
        <fullName evidence="11">Protein MATERNAL EFFECT EMBRYO ARREST 5</fullName>
    </alternativeName>
    <alternativeName>
        <fullName evidence="9">Protein VAJRA-1</fullName>
    </alternativeName>
    <alternativeName>
        <fullName evidence="11">SNU114 homolog</fullName>
    </alternativeName>
</protein>
<reference key="1">
    <citation type="journal article" date="2000" name="Nature">
        <title>Sequence and analysis of chromosome 1 of the plant Arabidopsis thaliana.</title>
        <authorList>
            <person name="Theologis A."/>
            <person name="Ecker J.R."/>
            <person name="Palm C.J."/>
            <person name="Federspiel N.A."/>
            <person name="Kaul S."/>
            <person name="White O."/>
            <person name="Alonso J."/>
            <person name="Altafi H."/>
            <person name="Araujo R."/>
            <person name="Bowman C.L."/>
            <person name="Brooks S.Y."/>
            <person name="Buehler E."/>
            <person name="Chan A."/>
            <person name="Chao Q."/>
            <person name="Chen H."/>
            <person name="Cheuk R.F."/>
            <person name="Chin C.W."/>
            <person name="Chung M.K."/>
            <person name="Conn L."/>
            <person name="Conway A.B."/>
            <person name="Conway A.R."/>
            <person name="Creasy T.H."/>
            <person name="Dewar K."/>
            <person name="Dunn P."/>
            <person name="Etgu P."/>
            <person name="Feldblyum T.V."/>
            <person name="Feng J.-D."/>
            <person name="Fong B."/>
            <person name="Fujii C.Y."/>
            <person name="Gill J.E."/>
            <person name="Goldsmith A.D."/>
            <person name="Haas B."/>
            <person name="Hansen N.F."/>
            <person name="Hughes B."/>
            <person name="Huizar L."/>
            <person name="Hunter J.L."/>
            <person name="Jenkins J."/>
            <person name="Johnson-Hopson C."/>
            <person name="Khan S."/>
            <person name="Khaykin E."/>
            <person name="Kim C.J."/>
            <person name="Koo H.L."/>
            <person name="Kremenetskaia I."/>
            <person name="Kurtz D.B."/>
            <person name="Kwan A."/>
            <person name="Lam B."/>
            <person name="Langin-Hooper S."/>
            <person name="Lee A."/>
            <person name="Lee J.M."/>
            <person name="Lenz C.A."/>
            <person name="Li J.H."/>
            <person name="Li Y.-P."/>
            <person name="Lin X."/>
            <person name="Liu S.X."/>
            <person name="Liu Z.A."/>
            <person name="Luros J.S."/>
            <person name="Maiti R."/>
            <person name="Marziali A."/>
            <person name="Militscher J."/>
            <person name="Miranda M."/>
            <person name="Nguyen M."/>
            <person name="Nierman W.C."/>
            <person name="Osborne B.I."/>
            <person name="Pai G."/>
            <person name="Peterson J."/>
            <person name="Pham P.K."/>
            <person name="Rizzo M."/>
            <person name="Rooney T."/>
            <person name="Rowley D."/>
            <person name="Sakano H."/>
            <person name="Salzberg S.L."/>
            <person name="Schwartz J.R."/>
            <person name="Shinn P."/>
            <person name="Southwick A.M."/>
            <person name="Sun H."/>
            <person name="Tallon L.J."/>
            <person name="Tambunga G."/>
            <person name="Toriumi M.J."/>
            <person name="Town C.D."/>
            <person name="Utterback T."/>
            <person name="Van Aken S."/>
            <person name="Vaysberg M."/>
            <person name="Vysotskaia V.S."/>
            <person name="Walker M."/>
            <person name="Wu D."/>
            <person name="Yu G."/>
            <person name="Fraser C.M."/>
            <person name="Venter J.C."/>
            <person name="Davis R.W."/>
        </authorList>
    </citation>
    <scope>NUCLEOTIDE SEQUENCE [LARGE SCALE GENOMIC DNA]</scope>
    <source>
        <strain>cv. Columbia</strain>
    </source>
</reference>
<reference key="2">
    <citation type="journal article" date="2017" name="Plant J.">
        <title>Araport11: a complete reannotation of the Arabidopsis thaliana reference genome.</title>
        <authorList>
            <person name="Cheng C.Y."/>
            <person name="Krishnakumar V."/>
            <person name="Chan A.P."/>
            <person name="Thibaud-Nissen F."/>
            <person name="Schobel S."/>
            <person name="Town C.D."/>
        </authorList>
    </citation>
    <scope>GENOME REANNOTATION</scope>
    <source>
        <strain>cv. Columbia</strain>
    </source>
</reference>
<reference key="3">
    <citation type="submission" date="2006-07" db="EMBL/GenBank/DDBJ databases">
        <title>Large-scale analysis of RIKEN Arabidopsis full-length (RAFL) cDNAs.</title>
        <authorList>
            <person name="Totoki Y."/>
            <person name="Seki M."/>
            <person name="Ishida J."/>
            <person name="Nakajima M."/>
            <person name="Enju A."/>
            <person name="Kamiya A."/>
            <person name="Narusaka M."/>
            <person name="Shin-i T."/>
            <person name="Nakagawa M."/>
            <person name="Sakamoto N."/>
            <person name="Oishi K."/>
            <person name="Kohara Y."/>
            <person name="Kobayashi M."/>
            <person name="Toyoda A."/>
            <person name="Sakaki Y."/>
            <person name="Sakurai T."/>
            <person name="Iida K."/>
            <person name="Akiyama K."/>
            <person name="Satou M."/>
            <person name="Toyoda T."/>
            <person name="Konagaya A."/>
            <person name="Carninci P."/>
            <person name="Kawai J."/>
            <person name="Hayashizaki Y."/>
            <person name="Shinozaki K."/>
        </authorList>
    </citation>
    <scope>NUCLEOTIDE SEQUENCE [LARGE SCALE MRNA]</scope>
    <source>
        <strain>cv. Columbia</strain>
    </source>
</reference>
<reference key="4">
    <citation type="journal article" date="2007" name="Sex. Plant Reprod.">
        <title>Segregation distortion in Arabidopsis gametophytic factor 1 (gfa1) mutants is caused by a deficiency of an essential RNA splicing factor.</title>
        <authorList>
            <person name="Coury D.A."/>
            <person name="Zhang C."/>
            <person name="Ara Ko A."/>
            <person name="Skaggs M.I."/>
            <person name="Christensen C.A."/>
            <person name="Drews G.N."/>
            <person name="Feldmann K.A."/>
            <person name="Yadegari R."/>
        </authorList>
    </citation>
    <scope>TISSUE SPECIFICITY</scope>
    <scope>DISRUPTION PHENOTYPE</scope>
</reference>
<reference key="5">
    <citation type="journal article" date="2008" name="Plant J.">
        <title>CLO/GFA1 and ATO are novel regulators of gametic cell fate in plants.</title>
        <authorList>
            <person name="Moll C."/>
            <person name="von Lyncker L."/>
            <person name="Zimmermann S."/>
            <person name="Kaegi C."/>
            <person name="Baumann N."/>
            <person name="Twell D."/>
            <person name="Grossniklaus U."/>
            <person name="Gross-Hardt R."/>
        </authorList>
    </citation>
    <scope>FUNCTION</scope>
    <scope>SUBCELLULAR LOCATION</scope>
    <scope>DISRUPTION PHENOTYPE</scope>
</reference>
<reference key="6">
    <citation type="journal article" date="2009" name="J. Integr. Plant Biol.">
        <title>GAMETOPHYTIC FACTOR 1, involved in pre-mRNA splicing, is essential for megagametogenesis and embryogenesis in Arabidopsis.</title>
        <authorList>
            <person name="Liu M."/>
            <person name="Yuan L."/>
            <person name="Liu N.Y."/>
            <person name="Shi D.Q."/>
            <person name="Liu J."/>
            <person name="Yang W.C."/>
        </authorList>
    </citation>
    <scope>FUNCTION</scope>
    <scope>INTERACTION WITH BRR2A AND PRP8A</scope>
    <scope>DEVELOPMENTAL STAGE</scope>
</reference>
<reference key="7">
    <citation type="journal article" date="2009" name="Plant Cell Physiol.">
        <title>VAJ/GFA1/CLO is involved in the directional control of floral organ growth.</title>
        <authorList>
            <person name="Yagi N."/>
            <person name="Takeda S."/>
            <person name="Matsumoto N."/>
            <person name="Okada K."/>
        </authorList>
    </citation>
    <scope>FUNCTION</scope>
    <scope>SUBCELLULAR LOCATION</scope>
</reference>
<keyword id="KW-0342">GTP-binding</keyword>
<keyword id="KW-0507">mRNA processing</keyword>
<keyword id="KW-0508">mRNA splicing</keyword>
<keyword id="KW-0547">Nucleotide-binding</keyword>
<keyword id="KW-0539">Nucleus</keyword>
<keyword id="KW-1185">Reference proteome</keyword>
<keyword id="KW-0747">Spliceosome</keyword>